<gene>
    <name evidence="1" type="primary">rpsO</name>
    <name type="ordered locus">BG0830</name>
</gene>
<reference key="1">
    <citation type="journal article" date="2004" name="Nucleic Acids Res.">
        <title>Comparative analysis of the Borrelia garinii genome.</title>
        <authorList>
            <person name="Gloeckner G."/>
            <person name="Lehmann R."/>
            <person name="Romualdi A."/>
            <person name="Pradella S."/>
            <person name="Schulte-Spechtel U."/>
            <person name="Schilhabel M."/>
            <person name="Wilske B."/>
            <person name="Suehnel J."/>
            <person name="Platzer M."/>
        </authorList>
    </citation>
    <scope>NUCLEOTIDE SEQUENCE [LARGE SCALE GENOMIC DNA]</scope>
    <source>
        <strain>ATCC BAA-2496 / DSM 23469 / PBi</strain>
    </source>
</reference>
<accession>Q65ZW9</accession>
<dbReference type="EMBL" id="CP000013">
    <property type="protein sequence ID" value="AAU07652.1"/>
    <property type="molecule type" value="Genomic_DNA"/>
</dbReference>
<dbReference type="RefSeq" id="WP_004793474.1">
    <property type="nucleotide sequence ID" value="NZ_CP028872.1"/>
</dbReference>
<dbReference type="SMR" id="Q65ZW9"/>
<dbReference type="GeneID" id="83866287"/>
<dbReference type="KEGG" id="bga:BG0830"/>
<dbReference type="eggNOG" id="COG0184">
    <property type="taxonomic scope" value="Bacteria"/>
</dbReference>
<dbReference type="HOGENOM" id="CLU_148518_0_0_12"/>
<dbReference type="OrthoDB" id="9799262at2"/>
<dbReference type="Proteomes" id="UP000002276">
    <property type="component" value="Chromosome"/>
</dbReference>
<dbReference type="GO" id="GO:0022627">
    <property type="term" value="C:cytosolic small ribosomal subunit"/>
    <property type="evidence" value="ECO:0007669"/>
    <property type="project" value="TreeGrafter"/>
</dbReference>
<dbReference type="GO" id="GO:0019843">
    <property type="term" value="F:rRNA binding"/>
    <property type="evidence" value="ECO:0007669"/>
    <property type="project" value="UniProtKB-UniRule"/>
</dbReference>
<dbReference type="GO" id="GO:0003735">
    <property type="term" value="F:structural constituent of ribosome"/>
    <property type="evidence" value="ECO:0007669"/>
    <property type="project" value="InterPro"/>
</dbReference>
<dbReference type="GO" id="GO:0006412">
    <property type="term" value="P:translation"/>
    <property type="evidence" value="ECO:0007669"/>
    <property type="project" value="UniProtKB-UniRule"/>
</dbReference>
<dbReference type="CDD" id="cd00353">
    <property type="entry name" value="Ribosomal_S15p_S13e"/>
    <property type="match status" value="1"/>
</dbReference>
<dbReference type="FunFam" id="1.10.287.10:FF:000002">
    <property type="entry name" value="30S ribosomal protein S15"/>
    <property type="match status" value="1"/>
</dbReference>
<dbReference type="Gene3D" id="6.10.250.3130">
    <property type="match status" value="1"/>
</dbReference>
<dbReference type="Gene3D" id="1.10.287.10">
    <property type="entry name" value="S15/NS1, RNA-binding"/>
    <property type="match status" value="1"/>
</dbReference>
<dbReference type="HAMAP" id="MF_01343_B">
    <property type="entry name" value="Ribosomal_uS15_B"/>
    <property type="match status" value="1"/>
</dbReference>
<dbReference type="InterPro" id="IPR000589">
    <property type="entry name" value="Ribosomal_uS15"/>
</dbReference>
<dbReference type="InterPro" id="IPR005290">
    <property type="entry name" value="Ribosomal_uS15_bac-type"/>
</dbReference>
<dbReference type="InterPro" id="IPR009068">
    <property type="entry name" value="uS15_NS1_RNA-bd_sf"/>
</dbReference>
<dbReference type="NCBIfam" id="TIGR00952">
    <property type="entry name" value="S15_bact"/>
    <property type="match status" value="1"/>
</dbReference>
<dbReference type="PANTHER" id="PTHR23321">
    <property type="entry name" value="RIBOSOMAL PROTEIN S15, BACTERIAL AND ORGANELLAR"/>
    <property type="match status" value="1"/>
</dbReference>
<dbReference type="PANTHER" id="PTHR23321:SF26">
    <property type="entry name" value="SMALL RIBOSOMAL SUBUNIT PROTEIN US15M"/>
    <property type="match status" value="1"/>
</dbReference>
<dbReference type="Pfam" id="PF00312">
    <property type="entry name" value="Ribosomal_S15"/>
    <property type="match status" value="1"/>
</dbReference>
<dbReference type="SMART" id="SM01387">
    <property type="entry name" value="Ribosomal_S15"/>
    <property type="match status" value="1"/>
</dbReference>
<dbReference type="SUPFAM" id="SSF47060">
    <property type="entry name" value="S15/NS1 RNA-binding domain"/>
    <property type="match status" value="1"/>
</dbReference>
<dbReference type="PROSITE" id="PS00362">
    <property type="entry name" value="RIBOSOMAL_S15"/>
    <property type="match status" value="1"/>
</dbReference>
<proteinExistence type="inferred from homology"/>
<feature type="chain" id="PRO_0000115396" description="Small ribosomal subunit protein uS15">
    <location>
        <begin position="1"/>
        <end position="88"/>
    </location>
</feature>
<sequence>MIDKKQKQKIVSEFGKNESDTGSVGVQIALITGRIKYLTEHLKTNKKDHSSKRGLLKLVGQRRSLLRYYQKKDLEAYRILISKLGLRK</sequence>
<organism>
    <name type="scientific">Borrelia garinii subsp. bavariensis (strain ATCC BAA-2496 / DSM 23469 / PBi)</name>
    <name type="common">Borreliella bavariensis</name>
    <dbReference type="NCBI Taxonomy" id="290434"/>
    <lineage>
        <taxon>Bacteria</taxon>
        <taxon>Pseudomonadati</taxon>
        <taxon>Spirochaetota</taxon>
        <taxon>Spirochaetia</taxon>
        <taxon>Spirochaetales</taxon>
        <taxon>Borreliaceae</taxon>
        <taxon>Borreliella</taxon>
    </lineage>
</organism>
<comment type="function">
    <text evidence="1">One of the primary rRNA binding proteins, it binds directly to 16S rRNA where it helps nucleate assembly of the platform of the 30S subunit by binding and bridging several RNA helices of the 16S rRNA.</text>
</comment>
<comment type="function">
    <text evidence="1">Forms an intersubunit bridge (bridge B4) with the 23S rRNA of the 50S subunit in the ribosome.</text>
</comment>
<comment type="subunit">
    <text evidence="1">Part of the 30S ribosomal subunit. Forms a bridge to the 50S subunit in the 70S ribosome, contacting the 23S rRNA.</text>
</comment>
<comment type="similarity">
    <text evidence="1">Belongs to the universal ribosomal protein uS15 family.</text>
</comment>
<name>RS15_BORGP</name>
<protein>
    <recommendedName>
        <fullName evidence="1">Small ribosomal subunit protein uS15</fullName>
    </recommendedName>
    <alternativeName>
        <fullName evidence="2">30S ribosomal protein S15</fullName>
    </alternativeName>
</protein>
<keyword id="KW-0687">Ribonucleoprotein</keyword>
<keyword id="KW-0689">Ribosomal protein</keyword>
<keyword id="KW-0694">RNA-binding</keyword>
<keyword id="KW-0699">rRNA-binding</keyword>
<evidence type="ECO:0000255" key="1">
    <source>
        <dbReference type="HAMAP-Rule" id="MF_01343"/>
    </source>
</evidence>
<evidence type="ECO:0000305" key="2"/>